<accession>P58594</accession>
<dbReference type="EMBL" id="AL646053">
    <property type="protein sequence ID" value="CAD18166.1"/>
    <property type="molecule type" value="Genomic_DNA"/>
</dbReference>
<dbReference type="RefSeq" id="WP_011004305.1">
    <property type="nucleotide sequence ID" value="NC_003296.1"/>
</dbReference>
<dbReference type="SMR" id="P58594"/>
<dbReference type="STRING" id="267608.RSp1015"/>
<dbReference type="EnsemblBacteria" id="CAD18166">
    <property type="protein sequence ID" value="CAD18166"/>
    <property type="gene ID" value="RSp1015"/>
</dbReference>
<dbReference type="KEGG" id="rso:RSp1015"/>
<dbReference type="PATRIC" id="fig|267608.8.peg.4496"/>
<dbReference type="eggNOG" id="COG2244">
    <property type="taxonomic scope" value="Bacteria"/>
</dbReference>
<dbReference type="HOGENOM" id="CLU_628318_0_0_4"/>
<dbReference type="Proteomes" id="UP000001436">
    <property type="component" value="Plasmid megaplasmid Rsp"/>
</dbReference>
<dbReference type="GO" id="GO:0005886">
    <property type="term" value="C:plasma membrane"/>
    <property type="evidence" value="ECO:0007669"/>
    <property type="project" value="UniProtKB-SubCell"/>
</dbReference>
<dbReference type="GO" id="GO:0015774">
    <property type="term" value="P:polysaccharide transport"/>
    <property type="evidence" value="ECO:0007669"/>
    <property type="project" value="UniProtKB-KW"/>
</dbReference>
<dbReference type="InterPro" id="IPR050833">
    <property type="entry name" value="Poly_Biosynth_Transport"/>
</dbReference>
<dbReference type="PANTHER" id="PTHR30250:SF11">
    <property type="entry name" value="O-ANTIGEN TRANSPORTER-RELATED"/>
    <property type="match status" value="1"/>
</dbReference>
<dbReference type="PANTHER" id="PTHR30250">
    <property type="entry name" value="PST FAMILY PREDICTED COLANIC ACID TRANSPORTER"/>
    <property type="match status" value="1"/>
</dbReference>
<sequence length="436" mass="45890">MQKTAPRPPSARISFLSASVLGLGAAVASRGAVFLVNIMLAHSLTVHDFGLFSYAYVTALNLGLFLATGVSQAAGHVLPLTEDPERRRRQLCAFIVLLVALIAVAATALYLSATSISIAAFGSAQGGEALRMAAIVLIATAFTQALQAFLYAMHEHRASASVSIGAALLLLAMLWTMGPIRQPVVALVIFLAINAGAAASQLVILGRTTQNQRGPWRTGRQELRLAFKHALPSVLTTSMGAPVHWICLSMLAAMTDGAHQLALFSVAFQWYIAITFIPATLGNLALPFLARNTGATEAMVRQRFRSALLFGGGLSLALGCMAFLLAGQIFAWLYPAAYGSAAASMRSLAVAAALCGISVLLQQRIAAAGKFWRNFAMAAVYSVIYVAAAYLALRLGYGAPSIGLAMSAAYCCLILFQTLTLQSDSGAAIRLGRSFS</sequence>
<name>EPSE_RALN1</name>
<protein>
    <recommendedName>
        <fullName>EPS I polysaccharide export inner membrane protein EpsE</fullName>
    </recommendedName>
</protein>
<proteinExistence type="inferred from homology"/>
<comment type="function">
    <text evidence="1">Probably involved in polymerization and/or export of exopolysaccharide EPS I which functions as a virulence factor. May play a role in export of EPS I or its intermediates across the membranes (By similarity).</text>
</comment>
<comment type="subcellular location">
    <subcellularLocation>
        <location evidence="3">Cell inner membrane</location>
        <topology evidence="3">Multi-pass membrane protein</topology>
    </subcellularLocation>
</comment>
<comment type="similarity">
    <text evidence="3">To E.coli bicyclomycin resistance protein (BCR).</text>
</comment>
<evidence type="ECO:0000250" key="1"/>
<evidence type="ECO:0000255" key="2"/>
<evidence type="ECO:0000305" key="3"/>
<geneLocation type="plasmid">
    <name>megaplasmid Rsp</name>
</geneLocation>
<reference key="1">
    <citation type="journal article" date="2002" name="Nature">
        <title>Genome sequence of the plant pathogen Ralstonia solanacearum.</title>
        <authorList>
            <person name="Salanoubat M."/>
            <person name="Genin S."/>
            <person name="Artiguenave F."/>
            <person name="Gouzy J."/>
            <person name="Mangenot S."/>
            <person name="Arlat M."/>
            <person name="Billault A."/>
            <person name="Brottier P."/>
            <person name="Camus J.-C."/>
            <person name="Cattolico L."/>
            <person name="Chandler M."/>
            <person name="Choisne N."/>
            <person name="Claudel-Renard C."/>
            <person name="Cunnac S."/>
            <person name="Demange N."/>
            <person name="Gaspin C."/>
            <person name="Lavie M."/>
            <person name="Moisan A."/>
            <person name="Robert C."/>
            <person name="Saurin W."/>
            <person name="Schiex T."/>
            <person name="Siguier P."/>
            <person name="Thebault P."/>
            <person name="Whalen M."/>
            <person name="Wincker P."/>
            <person name="Levy M."/>
            <person name="Weissenbach J."/>
            <person name="Boucher C.A."/>
        </authorList>
    </citation>
    <scope>NUCLEOTIDE SEQUENCE [LARGE SCALE GENOMIC DNA]</scope>
    <source>
        <strain>ATCC BAA-1114 / GMI1000</strain>
    </source>
</reference>
<gene>
    <name type="primary">epsE</name>
    <name type="ordered locus">RSp1015</name>
    <name type="ORF">RS02349</name>
</gene>
<feature type="chain" id="PRO_0000086997" description="EPS I polysaccharide export inner membrane protein EpsE">
    <location>
        <begin position="1"/>
        <end position="436"/>
    </location>
</feature>
<feature type="transmembrane region" description="Helical" evidence="2">
    <location>
        <begin position="20"/>
        <end position="40"/>
    </location>
</feature>
<feature type="transmembrane region" description="Helical" evidence="2">
    <location>
        <begin position="49"/>
        <end position="69"/>
    </location>
</feature>
<feature type="transmembrane region" description="Helical" evidence="2">
    <location>
        <begin position="91"/>
        <end position="111"/>
    </location>
</feature>
<feature type="transmembrane region" description="Helical" evidence="2">
    <location>
        <begin position="132"/>
        <end position="152"/>
    </location>
</feature>
<feature type="transmembrane region" description="Helical" evidence="2">
    <location>
        <begin position="160"/>
        <end position="180"/>
    </location>
</feature>
<feature type="transmembrane region" description="Helical" evidence="2">
    <location>
        <begin position="184"/>
        <end position="204"/>
    </location>
</feature>
<feature type="transmembrane region" description="Helical" evidence="2">
    <location>
        <begin position="234"/>
        <end position="254"/>
    </location>
</feature>
<feature type="transmembrane region" description="Helical" evidence="2">
    <location>
        <begin position="261"/>
        <end position="281"/>
    </location>
</feature>
<feature type="transmembrane region" description="Helical" evidence="2">
    <location>
        <begin position="307"/>
        <end position="327"/>
    </location>
</feature>
<feature type="transmembrane region" description="Helical" evidence="2">
    <location>
        <begin position="341"/>
        <end position="361"/>
    </location>
</feature>
<feature type="transmembrane region" description="Helical" evidence="2">
    <location>
        <begin position="375"/>
        <end position="395"/>
    </location>
</feature>
<feature type="transmembrane region" description="Helical" evidence="2">
    <location>
        <begin position="396"/>
        <end position="416"/>
    </location>
</feature>
<organism>
    <name type="scientific">Ralstonia nicotianae (strain ATCC BAA-1114 / GMI1000)</name>
    <name type="common">Ralstonia solanacearum</name>
    <dbReference type="NCBI Taxonomy" id="267608"/>
    <lineage>
        <taxon>Bacteria</taxon>
        <taxon>Pseudomonadati</taxon>
        <taxon>Pseudomonadota</taxon>
        <taxon>Betaproteobacteria</taxon>
        <taxon>Burkholderiales</taxon>
        <taxon>Burkholderiaceae</taxon>
        <taxon>Ralstonia</taxon>
        <taxon>Ralstonia solanacearum species complex</taxon>
    </lineage>
</organism>
<keyword id="KW-0997">Cell inner membrane</keyword>
<keyword id="KW-1003">Cell membrane</keyword>
<keyword id="KW-0472">Membrane</keyword>
<keyword id="KW-0614">Plasmid</keyword>
<keyword id="KW-0625">Polysaccharide transport</keyword>
<keyword id="KW-1185">Reference proteome</keyword>
<keyword id="KW-0762">Sugar transport</keyword>
<keyword id="KW-0812">Transmembrane</keyword>
<keyword id="KW-1133">Transmembrane helix</keyword>
<keyword id="KW-0813">Transport</keyword>
<keyword id="KW-0843">Virulence</keyword>